<proteinExistence type="inferred from homology"/>
<sequence length="216" mass="24397">MSFIDSLSPQNVIPVEEIRYDERGLVPAIVQDYLDGTVLMMAWMNRESLQKTLDTGETWFWSRSRQEFWHKGGTSGHTQKVQSIRYDCDSDALLVGVEQIGDIACHTGERSCFHQVEGKIVAPPGDTLSQVFQVICDRRNHPTESSYTSKLFAGGDNKILKKIGEESAEVVMACKDDDQEAIAGEVADLLYHTLVALAHHQVDIKAVYRKLQERRR</sequence>
<feature type="chain" id="PRO_0000136400" description="Histidine biosynthesis bifunctional protein HisIE">
    <location>
        <begin position="1"/>
        <end position="216"/>
    </location>
</feature>
<feature type="region of interest" description="Phosphoribosyl-AMP cyclohydrolase">
    <location>
        <begin position="1"/>
        <end position="127"/>
    </location>
</feature>
<feature type="region of interest" description="Phosphoribosyl-ATP pyrophosphohydrolase">
    <location>
        <begin position="128"/>
        <end position="216"/>
    </location>
</feature>
<accession>Q8YS28</accession>
<keyword id="KW-0028">Amino-acid biosynthesis</keyword>
<keyword id="KW-0067">ATP-binding</keyword>
<keyword id="KW-0963">Cytoplasm</keyword>
<keyword id="KW-0368">Histidine biosynthesis</keyword>
<keyword id="KW-0378">Hydrolase</keyword>
<keyword id="KW-0511">Multifunctional enzyme</keyword>
<keyword id="KW-0547">Nucleotide-binding</keyword>
<keyword id="KW-1185">Reference proteome</keyword>
<evidence type="ECO:0000250" key="1"/>
<evidence type="ECO:0000305" key="2"/>
<name>HIS2_NOSS1</name>
<protein>
    <recommendedName>
        <fullName>Histidine biosynthesis bifunctional protein HisIE</fullName>
    </recommendedName>
    <domain>
        <recommendedName>
            <fullName>Phosphoribosyl-AMP cyclohydrolase</fullName>
            <shortName>PRA-CH</shortName>
            <ecNumber>3.5.4.19</ecNumber>
        </recommendedName>
    </domain>
    <domain>
        <recommendedName>
            <fullName>Phosphoribosyl-ATP pyrophosphatase</fullName>
            <shortName>PRA-PH</shortName>
            <ecNumber>3.6.1.31</ecNumber>
        </recommendedName>
    </domain>
</protein>
<reference key="1">
    <citation type="journal article" date="2001" name="DNA Res.">
        <title>Complete genomic sequence of the filamentous nitrogen-fixing cyanobacterium Anabaena sp. strain PCC 7120.</title>
        <authorList>
            <person name="Kaneko T."/>
            <person name="Nakamura Y."/>
            <person name="Wolk C.P."/>
            <person name="Kuritz T."/>
            <person name="Sasamoto S."/>
            <person name="Watanabe A."/>
            <person name="Iriguchi M."/>
            <person name="Ishikawa A."/>
            <person name="Kawashima K."/>
            <person name="Kimura T."/>
            <person name="Kishida Y."/>
            <person name="Kohara M."/>
            <person name="Matsumoto M."/>
            <person name="Matsuno A."/>
            <person name="Muraki A."/>
            <person name="Nakazaki N."/>
            <person name="Shimpo S."/>
            <person name="Sugimoto M."/>
            <person name="Takazawa M."/>
            <person name="Yamada M."/>
            <person name="Yasuda M."/>
            <person name="Tabata S."/>
        </authorList>
    </citation>
    <scope>NUCLEOTIDE SEQUENCE [LARGE SCALE GENOMIC DNA]</scope>
    <source>
        <strain>PCC 7120 / SAG 25.82 / UTEX 2576</strain>
    </source>
</reference>
<organism>
    <name type="scientific">Nostoc sp. (strain PCC 7120 / SAG 25.82 / UTEX 2576)</name>
    <dbReference type="NCBI Taxonomy" id="103690"/>
    <lineage>
        <taxon>Bacteria</taxon>
        <taxon>Bacillati</taxon>
        <taxon>Cyanobacteriota</taxon>
        <taxon>Cyanophyceae</taxon>
        <taxon>Nostocales</taxon>
        <taxon>Nostocaceae</taxon>
        <taxon>Nostoc</taxon>
    </lineage>
</organism>
<dbReference type="EC" id="3.5.4.19"/>
<dbReference type="EC" id="3.6.1.31"/>
<dbReference type="EMBL" id="BA000019">
    <property type="protein sequence ID" value="BAB74962.1"/>
    <property type="molecule type" value="Genomic_DNA"/>
</dbReference>
<dbReference type="PIR" id="AH2213">
    <property type="entry name" value="AH2213"/>
</dbReference>
<dbReference type="RefSeq" id="WP_010997414.1">
    <property type="nucleotide sequence ID" value="NZ_RSCN01000001.1"/>
</dbReference>
<dbReference type="SMR" id="Q8YS28"/>
<dbReference type="STRING" id="103690.gene:10495301"/>
<dbReference type="KEGG" id="ana:all3263"/>
<dbReference type="eggNOG" id="COG0139">
    <property type="taxonomic scope" value="Bacteria"/>
</dbReference>
<dbReference type="eggNOG" id="COG0140">
    <property type="taxonomic scope" value="Bacteria"/>
</dbReference>
<dbReference type="OrthoDB" id="9795769at2"/>
<dbReference type="UniPathway" id="UPA00031">
    <property type="reaction ID" value="UER00007"/>
</dbReference>
<dbReference type="UniPathway" id="UPA00031">
    <property type="reaction ID" value="UER00008"/>
</dbReference>
<dbReference type="Proteomes" id="UP000002483">
    <property type="component" value="Chromosome"/>
</dbReference>
<dbReference type="GO" id="GO:0005737">
    <property type="term" value="C:cytoplasm"/>
    <property type="evidence" value="ECO:0007669"/>
    <property type="project" value="UniProtKB-SubCell"/>
</dbReference>
<dbReference type="GO" id="GO:0005524">
    <property type="term" value="F:ATP binding"/>
    <property type="evidence" value="ECO:0007669"/>
    <property type="project" value="UniProtKB-KW"/>
</dbReference>
<dbReference type="GO" id="GO:0004635">
    <property type="term" value="F:phosphoribosyl-AMP cyclohydrolase activity"/>
    <property type="evidence" value="ECO:0007669"/>
    <property type="project" value="UniProtKB-UniRule"/>
</dbReference>
<dbReference type="GO" id="GO:0004636">
    <property type="term" value="F:phosphoribosyl-ATP diphosphatase activity"/>
    <property type="evidence" value="ECO:0007669"/>
    <property type="project" value="UniProtKB-UniRule"/>
</dbReference>
<dbReference type="GO" id="GO:0000105">
    <property type="term" value="P:L-histidine biosynthetic process"/>
    <property type="evidence" value="ECO:0007669"/>
    <property type="project" value="UniProtKB-UniRule"/>
</dbReference>
<dbReference type="CDD" id="cd11534">
    <property type="entry name" value="NTP-PPase_HisIE_like"/>
    <property type="match status" value="1"/>
</dbReference>
<dbReference type="FunFam" id="3.10.20.810:FF:000001">
    <property type="entry name" value="Histidine biosynthesis bifunctional protein HisIE"/>
    <property type="match status" value="1"/>
</dbReference>
<dbReference type="Gene3D" id="1.10.287.1080">
    <property type="entry name" value="MazG-like"/>
    <property type="match status" value="1"/>
</dbReference>
<dbReference type="Gene3D" id="3.10.20.810">
    <property type="entry name" value="Phosphoribosyl-AMP cyclohydrolase"/>
    <property type="match status" value="1"/>
</dbReference>
<dbReference type="HAMAP" id="MF_01020">
    <property type="entry name" value="HisE"/>
    <property type="match status" value="1"/>
</dbReference>
<dbReference type="HAMAP" id="MF_01021">
    <property type="entry name" value="HisI"/>
    <property type="match status" value="1"/>
</dbReference>
<dbReference type="HAMAP" id="MF_01019">
    <property type="entry name" value="HisIE"/>
    <property type="match status" value="1"/>
</dbReference>
<dbReference type="InterPro" id="IPR023019">
    <property type="entry name" value="His_synth_HisIE"/>
</dbReference>
<dbReference type="InterPro" id="IPR008179">
    <property type="entry name" value="HisE"/>
</dbReference>
<dbReference type="InterPro" id="IPR026660">
    <property type="entry name" value="PRA-CH"/>
</dbReference>
<dbReference type="InterPro" id="IPR021130">
    <property type="entry name" value="PRib-ATP_PPHydrolase-like"/>
</dbReference>
<dbReference type="InterPro" id="IPR002496">
    <property type="entry name" value="PRib_AMP_CycHydrolase_dom"/>
</dbReference>
<dbReference type="InterPro" id="IPR038019">
    <property type="entry name" value="PRib_AMP_CycHydrolase_sf"/>
</dbReference>
<dbReference type="NCBIfam" id="TIGR03188">
    <property type="entry name" value="histidine_hisI"/>
    <property type="match status" value="1"/>
</dbReference>
<dbReference type="NCBIfam" id="NF000768">
    <property type="entry name" value="PRK00051.1"/>
    <property type="match status" value="1"/>
</dbReference>
<dbReference type="NCBIfam" id="NF001611">
    <property type="entry name" value="PRK00400.1-3"/>
    <property type="match status" value="1"/>
</dbReference>
<dbReference type="NCBIfam" id="NF002747">
    <property type="entry name" value="PRK02759.1"/>
    <property type="match status" value="1"/>
</dbReference>
<dbReference type="PANTHER" id="PTHR42945">
    <property type="entry name" value="HISTIDINE BIOSYNTHESIS BIFUNCTIONAL PROTEIN"/>
    <property type="match status" value="1"/>
</dbReference>
<dbReference type="PANTHER" id="PTHR42945:SF1">
    <property type="entry name" value="HISTIDINE BIOSYNTHESIS BIFUNCTIONAL PROTEIN HIS7"/>
    <property type="match status" value="1"/>
</dbReference>
<dbReference type="Pfam" id="PF01502">
    <property type="entry name" value="PRA-CH"/>
    <property type="match status" value="1"/>
</dbReference>
<dbReference type="Pfam" id="PF01503">
    <property type="entry name" value="PRA-PH"/>
    <property type="match status" value="1"/>
</dbReference>
<dbReference type="SUPFAM" id="SSF101386">
    <property type="entry name" value="all-alpha NTP pyrophosphatases"/>
    <property type="match status" value="1"/>
</dbReference>
<dbReference type="SUPFAM" id="SSF141734">
    <property type="entry name" value="HisI-like"/>
    <property type="match status" value="1"/>
</dbReference>
<comment type="catalytic activity">
    <reaction>
        <text>1-(5-phospho-beta-D-ribosyl)-ATP + H2O = 1-(5-phospho-beta-D-ribosyl)-5'-AMP + diphosphate + H(+)</text>
        <dbReference type="Rhea" id="RHEA:22828"/>
        <dbReference type="ChEBI" id="CHEBI:15377"/>
        <dbReference type="ChEBI" id="CHEBI:15378"/>
        <dbReference type="ChEBI" id="CHEBI:33019"/>
        <dbReference type="ChEBI" id="CHEBI:59457"/>
        <dbReference type="ChEBI" id="CHEBI:73183"/>
        <dbReference type="EC" id="3.6.1.31"/>
    </reaction>
</comment>
<comment type="catalytic activity">
    <reaction>
        <text>1-(5-phospho-beta-D-ribosyl)-5'-AMP + H2O = 1-(5-phospho-beta-D-ribosyl)-5-[(5-phospho-beta-D-ribosylamino)methylideneamino]imidazole-4-carboxamide</text>
        <dbReference type="Rhea" id="RHEA:20049"/>
        <dbReference type="ChEBI" id="CHEBI:15377"/>
        <dbReference type="ChEBI" id="CHEBI:58435"/>
        <dbReference type="ChEBI" id="CHEBI:59457"/>
        <dbReference type="EC" id="3.5.4.19"/>
    </reaction>
</comment>
<comment type="pathway">
    <text>Amino-acid biosynthesis; L-histidine biosynthesis; L-histidine from 5-phospho-alpha-D-ribose 1-diphosphate: step 2/9.</text>
</comment>
<comment type="pathway">
    <text>Amino-acid biosynthesis; L-histidine biosynthesis; L-histidine from 5-phospho-alpha-D-ribose 1-diphosphate: step 3/9.</text>
</comment>
<comment type="subcellular location">
    <subcellularLocation>
        <location evidence="1">Cytoplasm</location>
    </subcellularLocation>
</comment>
<comment type="similarity">
    <text evidence="2">In the N-terminal section; belongs to the PRA-CH family.</text>
</comment>
<comment type="similarity">
    <text evidence="2">In the C-terminal section; belongs to the PRA-PH family.</text>
</comment>
<gene>
    <name type="primary">hisI</name>
    <name type="synonym">hisIE</name>
    <name type="ordered locus">all3263</name>
</gene>